<proteinExistence type="evidence at transcript level"/>
<protein>
    <recommendedName>
        <fullName>Fiber protein</fullName>
        <shortName>SPIKE</shortName>
    </recommendedName>
    <alternativeName>
        <fullName>Protein IV</fullName>
    </alternativeName>
</protein>
<dbReference type="EMBL" id="M30594">
    <property type="protein sequence ID" value="AAA42434.1"/>
    <property type="molecule type" value="Genomic_DNA"/>
</dbReference>
<dbReference type="PIR" id="C33382">
    <property type="entry name" value="ERADFM"/>
</dbReference>
<dbReference type="GO" id="GO:0042025">
    <property type="term" value="C:host cell nucleus"/>
    <property type="evidence" value="ECO:0007669"/>
    <property type="project" value="UniProtKB-SubCell"/>
</dbReference>
<dbReference type="GO" id="GO:0019028">
    <property type="term" value="C:viral capsid"/>
    <property type="evidence" value="ECO:0007669"/>
    <property type="project" value="UniProtKB-KW"/>
</dbReference>
<dbReference type="GO" id="GO:0098671">
    <property type="term" value="P:adhesion receptor-mediated virion attachment to host cell"/>
    <property type="evidence" value="ECO:0007669"/>
    <property type="project" value="UniProtKB-KW"/>
</dbReference>
<dbReference type="GO" id="GO:0007155">
    <property type="term" value="P:cell adhesion"/>
    <property type="evidence" value="ECO:0007669"/>
    <property type="project" value="InterPro"/>
</dbReference>
<dbReference type="GO" id="GO:0046718">
    <property type="term" value="P:symbiont entry into host cell"/>
    <property type="evidence" value="ECO:0007669"/>
    <property type="project" value="UniProtKB-KW"/>
</dbReference>
<dbReference type="Gene3D" id="2.60.90.10">
    <property type="entry name" value="Adenovirus pIV-related, attachment domain"/>
    <property type="match status" value="2"/>
</dbReference>
<dbReference type="Gene3D" id="2.10.25.20">
    <property type="entry name" value="reovirus attachment protein sigma1, domain 1"/>
    <property type="match status" value="2"/>
</dbReference>
<dbReference type="InterPro" id="IPR000931">
    <property type="entry name" value="Adeno_fibre"/>
</dbReference>
<dbReference type="InterPro" id="IPR000978">
    <property type="entry name" value="Adeno_fibre_knob"/>
</dbReference>
<dbReference type="InterPro" id="IPR000939">
    <property type="entry name" value="Adenobir_fibre_prot_rpt/shaft"/>
</dbReference>
<dbReference type="InterPro" id="IPR008982">
    <property type="entry name" value="Adenovirus_pIV-like_att"/>
</dbReference>
<dbReference type="InterPro" id="IPR009013">
    <property type="entry name" value="Attachment_protein_shaft_sf"/>
</dbReference>
<dbReference type="Pfam" id="PF00541">
    <property type="entry name" value="Adeno_knob"/>
    <property type="match status" value="2"/>
</dbReference>
<dbReference type="Pfam" id="PF00608">
    <property type="entry name" value="Adeno_shaft"/>
    <property type="match status" value="6"/>
</dbReference>
<dbReference type="PRINTS" id="PR00307">
    <property type="entry name" value="ADENOVSFIBRE"/>
</dbReference>
<dbReference type="SUPFAM" id="SSF51225">
    <property type="entry name" value="Fibre shaft of virus attachment proteins"/>
    <property type="match status" value="3"/>
</dbReference>
<dbReference type="SUPFAM" id="SSF49835">
    <property type="entry name" value="Virus attachment protein globular domain"/>
    <property type="match status" value="1"/>
</dbReference>
<comment type="function">
    <text evidence="1">Forms spikes that protrude from each vertex of the icosahedral capsid. Interacts with host receptor to provide virion initial attachment to target cell. Fiber proteins are shed during virus entry, when virus is still at the cell surface (By similarity).</text>
</comment>
<comment type="subunit">
    <text evidence="1">Homotrimer. Interacts (via N-terminal tail region) with pentons (By similarity).</text>
</comment>
<comment type="subcellular location">
    <subcellularLocation>
        <location evidence="1">Virion</location>
    </subcellularLocation>
    <subcellularLocation>
        <location evidence="1">Host nucleus</location>
    </subcellularLocation>
    <text evidence="1">Anchored to the pentons, protrudes from the virion surface.</text>
</comment>
<comment type="induction">
    <text>Expressed in the late phase of the viral replicative cycle.</text>
</comment>
<comment type="domain">
    <text evidence="1">The tail region anchors the fiber to penton base capsomers, whereas the shaft, built from several repeated motifs, allows the knob to protrude from the virion.</text>
</comment>
<comment type="miscellaneous">
    <text evidence="1">All late proteins expressed from the major late promoter are produced by alternative splicing and alternative polyadenylation of the same gene giving rise to non-overlapping ORFs. A leader sequence is present in the N-terminus of all these mRNAs and is recognized by the viral shutoff protein to provide expression although conventional translation via ribosome scanning from the cap has been shut off in the host cell (By similarity).</text>
</comment>
<comment type="similarity">
    <text evidence="3">Belongs to the adenoviridae fiber family.</text>
</comment>
<organism>
    <name type="scientific">Murine adenovirus A serotype 1</name>
    <name type="common">MAdV-1</name>
    <name type="synonym">Murine adenovirus 1</name>
    <dbReference type="NCBI Taxonomy" id="10530"/>
    <lineage>
        <taxon>Viruses</taxon>
        <taxon>Varidnaviria</taxon>
        <taxon>Bamfordvirae</taxon>
        <taxon>Preplasmiviricota</taxon>
        <taxon>Tectiliviricetes</taxon>
        <taxon>Rowavirales</taxon>
        <taxon>Adenoviridae</taxon>
        <taxon>Mastadenovirus</taxon>
        <taxon>Murine mastadenovirus A</taxon>
    </lineage>
</organism>
<sequence length="613" mass="66802">MVEALNAVYPYDLALLPEDYEKTTAPDAVQAANAARPFLNPVYPYQQPVAGDFGFPIVMPPFFNSYDFTSIHGNTLSLRLNKPLKRTAKGLQLLLGSGLSVNADGQLESSEGISEADAPLQINDGVLQLSFGEGLSVNDHGELESKGKVEAVTLPLALQDHVMSLSFGQGLQVNDQGQLEALAMVHSTSAPLKVTNNNLELALGRGLIVDDQGQLRLAPNLLWPESPLAIEQGTNHLILFYNQSLDVEDGKLTLPEPFDPLTLDGGRLRMQLAPNSGLAVTEKGSLGINWGEGIQVKEQKITLKVTPANGLAVTEQGGLNINWGNGIKVDEQKVTLKTSNEFALTENGLYLTSPLNPIEVNQHGQLGIALGYGFHAHRGYLELTPQTLWTGLPIGNNGTFHTKQDCKIFLSLTRLGPMVHGTFMLQAPQYELTTNGMREITFSFNSTGGLEQPAPVTYWGALDPPPTAKAAEIENQKRVKKRAAPDPPVEPPPKRRGDLAVLFAKVAEQAMELAKEQAVQAQPPEHVNTDWADHMNLLRFMPNTLVYPTAATIAANLQFHDTRLSLRRATLKIRLNGSPDSAYQLGFMLELVGTQSASIVTDTISFWYYAEDY</sequence>
<evidence type="ECO:0000250" key="1"/>
<evidence type="ECO:0000256" key="2">
    <source>
        <dbReference type="SAM" id="MobiDB-lite"/>
    </source>
</evidence>
<evidence type="ECO:0000305" key="3"/>
<reference key="1">
    <citation type="journal article" date="1989" name="J. Virol.">
        <title>The mouse adenovirus type 1 contains an unusual E3 region.</title>
        <authorList>
            <person name="Raviprakash K.S."/>
            <person name="Grunhaus A."/>
            <person name="el Kholy M.A."/>
            <person name="Horwitz M.S."/>
        </authorList>
    </citation>
    <scope>NUCLEOTIDE SEQUENCE [GENOMIC DNA]</scope>
</reference>
<accession>P19721</accession>
<feature type="chain" id="PRO_0000221810" description="Fiber protein">
    <location>
        <begin position="1"/>
        <end position="613"/>
    </location>
</feature>
<feature type="region of interest" description="Disordered" evidence="2">
    <location>
        <begin position="474"/>
        <end position="496"/>
    </location>
</feature>
<organismHost>
    <name type="scientific">Mus musculus</name>
    <name type="common">Mouse</name>
    <dbReference type="NCBI Taxonomy" id="10090"/>
</organismHost>
<keyword id="KW-0167">Capsid protein</keyword>
<keyword id="KW-1048">Host nucleus</keyword>
<keyword id="KW-0945">Host-virus interaction</keyword>
<keyword id="KW-0426">Late protein</keyword>
<keyword id="KW-1233">Viral attachment to host adhesion receptor</keyword>
<keyword id="KW-1161">Viral attachment to host cell</keyword>
<keyword id="KW-0946">Virion</keyword>
<keyword id="KW-1160">Virus entry into host cell</keyword>
<name>SPIKE_ADEM1</name>
<gene>
    <name type="ORF">L5</name>
</gene>